<organism>
    <name type="scientific">Pseudomonas aeruginosa (strain ATCC 15692 / DSM 22644 / CIP 104116 / JCM 14847 / LMG 12228 / 1C / PRS 101 / PAO1)</name>
    <dbReference type="NCBI Taxonomy" id="208964"/>
    <lineage>
        <taxon>Bacteria</taxon>
        <taxon>Pseudomonadati</taxon>
        <taxon>Pseudomonadota</taxon>
        <taxon>Gammaproteobacteria</taxon>
        <taxon>Pseudomonadales</taxon>
        <taxon>Pseudomonadaceae</taxon>
        <taxon>Pseudomonas</taxon>
    </lineage>
</organism>
<sequence>MPSNALWLRADQLSSVSPAVLDWLFDEGSLTRRLTALADGAFRVEPLLEGWQTLRDDECQGLDVPTGSSGWVREVYLHGHDRPWVFARSVAARSALEGSGFDLALLGTRSLGELLFSDSAFERGPIEVCRYPAAGLPAEVRAEGLWGRRSRFSRGALGVLVAEVYLPRLWDQAGIADV</sequence>
<name>UBIC_PSEAE</name>
<feature type="chain" id="PRO_0000240555" description="Probable chorismate pyruvate-lyase">
    <location>
        <begin position="1"/>
        <end position="178"/>
    </location>
</feature>
<feature type="binding site" evidence="1">
    <location>
        <position position="73"/>
    </location>
    <ligand>
        <name>substrate</name>
    </ligand>
</feature>
<feature type="binding site" evidence="1">
    <location>
        <position position="111"/>
    </location>
    <ligand>
        <name>substrate</name>
    </ligand>
</feature>
<feature type="binding site" evidence="1">
    <location>
        <position position="163"/>
    </location>
    <ligand>
        <name>substrate</name>
    </ligand>
</feature>
<keyword id="KW-0963">Cytoplasm</keyword>
<keyword id="KW-0456">Lyase</keyword>
<keyword id="KW-0670">Pyruvate</keyword>
<keyword id="KW-1185">Reference proteome</keyword>
<keyword id="KW-0831">Ubiquinone biosynthesis</keyword>
<dbReference type="EC" id="4.1.3.40" evidence="1"/>
<dbReference type="EMBL" id="AE004091">
    <property type="protein sequence ID" value="AAG08742.1"/>
    <property type="molecule type" value="Genomic_DNA"/>
</dbReference>
<dbReference type="PIR" id="G82977">
    <property type="entry name" value="G82977"/>
</dbReference>
<dbReference type="RefSeq" id="NP_254044.1">
    <property type="nucleotide sequence ID" value="NC_002516.2"/>
</dbReference>
<dbReference type="RefSeq" id="WP_003114374.1">
    <property type="nucleotide sequence ID" value="NZ_QZGE01000020.1"/>
</dbReference>
<dbReference type="SMR" id="Q9HTK1"/>
<dbReference type="FunCoup" id="Q9HTK1">
    <property type="interactions" value="180"/>
</dbReference>
<dbReference type="STRING" id="208964.PA5357"/>
<dbReference type="PaxDb" id="208964-PA5357"/>
<dbReference type="DNASU" id="880316"/>
<dbReference type="GeneID" id="880316"/>
<dbReference type="KEGG" id="pae:PA5357"/>
<dbReference type="PATRIC" id="fig|208964.12.peg.5614"/>
<dbReference type="PseudoCAP" id="PA5357"/>
<dbReference type="HOGENOM" id="CLU_096824_3_0_6"/>
<dbReference type="InParanoid" id="Q9HTK1"/>
<dbReference type="OrthoDB" id="9789493at2"/>
<dbReference type="PhylomeDB" id="Q9HTK1"/>
<dbReference type="BioCyc" id="PAER208964:G1FZ6-5479-MONOMER"/>
<dbReference type="UniPathway" id="UPA00232"/>
<dbReference type="Proteomes" id="UP000002438">
    <property type="component" value="Chromosome"/>
</dbReference>
<dbReference type="GO" id="GO:0005829">
    <property type="term" value="C:cytosol"/>
    <property type="evidence" value="ECO:0000318"/>
    <property type="project" value="GO_Central"/>
</dbReference>
<dbReference type="GO" id="GO:0008813">
    <property type="term" value="F:chorismate lyase activity"/>
    <property type="evidence" value="ECO:0000318"/>
    <property type="project" value="GO_Central"/>
</dbReference>
<dbReference type="GO" id="GO:0042866">
    <property type="term" value="P:pyruvate biosynthetic process"/>
    <property type="evidence" value="ECO:0007669"/>
    <property type="project" value="UniProtKB-UniRule"/>
</dbReference>
<dbReference type="GO" id="GO:0006744">
    <property type="term" value="P:ubiquinone biosynthetic process"/>
    <property type="evidence" value="ECO:0000318"/>
    <property type="project" value="GO_Central"/>
</dbReference>
<dbReference type="FunFam" id="3.40.1410.10:FF:000031">
    <property type="entry name" value="Probable chorismate pyruvate-lyase"/>
    <property type="match status" value="1"/>
</dbReference>
<dbReference type="Gene3D" id="3.40.1410.10">
    <property type="entry name" value="Chorismate lyase-like"/>
    <property type="match status" value="1"/>
</dbReference>
<dbReference type="HAMAP" id="MF_01632">
    <property type="entry name" value="UbiC"/>
    <property type="match status" value="1"/>
</dbReference>
<dbReference type="InterPro" id="IPR007440">
    <property type="entry name" value="Chorismate--pyruvate_lyase"/>
</dbReference>
<dbReference type="InterPro" id="IPR028978">
    <property type="entry name" value="Chorismate_lyase_/UTRA_dom_sf"/>
</dbReference>
<dbReference type="PANTHER" id="PTHR38683">
    <property type="entry name" value="CHORISMATE PYRUVATE-LYASE"/>
    <property type="match status" value="1"/>
</dbReference>
<dbReference type="PANTHER" id="PTHR38683:SF1">
    <property type="entry name" value="CHORISMATE PYRUVATE-LYASE"/>
    <property type="match status" value="1"/>
</dbReference>
<dbReference type="Pfam" id="PF04345">
    <property type="entry name" value="Chor_lyase"/>
    <property type="match status" value="1"/>
</dbReference>
<dbReference type="SUPFAM" id="SSF64288">
    <property type="entry name" value="Chorismate lyase-like"/>
    <property type="match status" value="1"/>
</dbReference>
<protein>
    <recommendedName>
        <fullName evidence="1">Probable chorismate pyruvate-lyase</fullName>
        <shortName evidence="1">CL</shortName>
        <shortName evidence="1">CPL</shortName>
        <ecNumber evidence="1">4.1.3.40</ecNumber>
    </recommendedName>
</protein>
<comment type="function">
    <text evidence="1">Removes the pyruvyl group from chorismate, with concomitant aromatization of the ring, to provide 4-hydroxybenzoate (4HB) for the ubiquinone pathway.</text>
</comment>
<comment type="catalytic activity">
    <reaction evidence="1">
        <text>chorismate = 4-hydroxybenzoate + pyruvate</text>
        <dbReference type="Rhea" id="RHEA:16505"/>
        <dbReference type="ChEBI" id="CHEBI:15361"/>
        <dbReference type="ChEBI" id="CHEBI:17879"/>
        <dbReference type="ChEBI" id="CHEBI:29748"/>
        <dbReference type="EC" id="4.1.3.40"/>
    </reaction>
</comment>
<comment type="pathway">
    <text evidence="1">Cofactor biosynthesis; ubiquinone biosynthesis.</text>
</comment>
<comment type="subcellular location">
    <subcellularLocation>
        <location evidence="1">Cytoplasm</location>
    </subcellularLocation>
</comment>
<comment type="similarity">
    <text evidence="1">Belongs to the UbiC family.</text>
</comment>
<gene>
    <name evidence="1" type="primary">ubiC</name>
    <name type="ordered locus">PA5357</name>
</gene>
<evidence type="ECO:0000255" key="1">
    <source>
        <dbReference type="HAMAP-Rule" id="MF_01632"/>
    </source>
</evidence>
<proteinExistence type="inferred from homology"/>
<reference key="1">
    <citation type="journal article" date="2000" name="Nature">
        <title>Complete genome sequence of Pseudomonas aeruginosa PAO1, an opportunistic pathogen.</title>
        <authorList>
            <person name="Stover C.K."/>
            <person name="Pham X.-Q.T."/>
            <person name="Erwin A.L."/>
            <person name="Mizoguchi S.D."/>
            <person name="Warrener P."/>
            <person name="Hickey M.J."/>
            <person name="Brinkman F.S.L."/>
            <person name="Hufnagle W.O."/>
            <person name="Kowalik D.J."/>
            <person name="Lagrou M."/>
            <person name="Garber R.L."/>
            <person name="Goltry L."/>
            <person name="Tolentino E."/>
            <person name="Westbrock-Wadman S."/>
            <person name="Yuan Y."/>
            <person name="Brody L.L."/>
            <person name="Coulter S.N."/>
            <person name="Folger K.R."/>
            <person name="Kas A."/>
            <person name="Larbig K."/>
            <person name="Lim R.M."/>
            <person name="Smith K.A."/>
            <person name="Spencer D.H."/>
            <person name="Wong G.K.-S."/>
            <person name="Wu Z."/>
            <person name="Paulsen I.T."/>
            <person name="Reizer J."/>
            <person name="Saier M.H. Jr."/>
            <person name="Hancock R.E.W."/>
            <person name="Lory S."/>
            <person name="Olson M.V."/>
        </authorList>
    </citation>
    <scope>NUCLEOTIDE SEQUENCE [LARGE SCALE GENOMIC DNA]</scope>
    <source>
        <strain>ATCC 15692 / DSM 22644 / CIP 104116 / JCM 14847 / LMG 12228 / 1C / PRS 101 / PAO1</strain>
    </source>
</reference>
<accession>Q9HTK1</accession>